<keyword id="KW-0235">DNA replication</keyword>
<keyword id="KW-0236">DNA replication inhibitor</keyword>
<sequence length="235" mass="26703">MLLNTPAQLSLPLYLPDDETFASFYPGENPSLLAAIQSAVHQPHGSYIYFWSREGGGRSHLLHAACAELSQQGEAVGYVPLDKRAYFIPEVLEGMEQLALVCIDNIECIAGDEQWEMAMFNLYNRIVETGRTRLLITGDRPPRQLNLGLPDLASRLDWGQIYKLQPLSDDEKLQALQLRAKLRGFELPEDVGRFLLKRLDREMRTLFMTLDQLDRASITAQRKLTIPFVKEILSL</sequence>
<gene>
    <name evidence="2" type="primary">hda</name>
    <name type="ordered locus">YPK_1354</name>
</gene>
<feature type="chain" id="PRO_1000137827" description="DnaA regulatory inactivator Hda">
    <location>
        <begin position="1"/>
        <end position="235"/>
    </location>
</feature>
<accession>B1JSF7</accession>
<proteinExistence type="inferred from homology"/>
<organism>
    <name type="scientific">Yersinia pseudotuberculosis serotype O:3 (strain YPIII)</name>
    <dbReference type="NCBI Taxonomy" id="502800"/>
    <lineage>
        <taxon>Bacteria</taxon>
        <taxon>Pseudomonadati</taxon>
        <taxon>Pseudomonadota</taxon>
        <taxon>Gammaproteobacteria</taxon>
        <taxon>Enterobacterales</taxon>
        <taxon>Yersiniaceae</taxon>
        <taxon>Yersinia</taxon>
    </lineage>
</organism>
<evidence type="ECO:0000250" key="1"/>
<evidence type="ECO:0000255" key="2">
    <source>
        <dbReference type="HAMAP-Rule" id="MF_01158"/>
    </source>
</evidence>
<reference key="1">
    <citation type="submission" date="2008-02" db="EMBL/GenBank/DDBJ databases">
        <title>Complete sequence of Yersinia pseudotuberculosis YPIII.</title>
        <authorList>
            <consortium name="US DOE Joint Genome Institute"/>
            <person name="Copeland A."/>
            <person name="Lucas S."/>
            <person name="Lapidus A."/>
            <person name="Glavina del Rio T."/>
            <person name="Dalin E."/>
            <person name="Tice H."/>
            <person name="Bruce D."/>
            <person name="Goodwin L."/>
            <person name="Pitluck S."/>
            <person name="Munk A.C."/>
            <person name="Brettin T."/>
            <person name="Detter J.C."/>
            <person name="Han C."/>
            <person name="Tapia R."/>
            <person name="Schmutz J."/>
            <person name="Larimer F."/>
            <person name="Land M."/>
            <person name="Hauser L."/>
            <person name="Challacombe J.F."/>
            <person name="Green L."/>
            <person name="Lindler L.E."/>
            <person name="Nikolich M.P."/>
            <person name="Richardson P."/>
        </authorList>
    </citation>
    <scope>NUCLEOTIDE SEQUENCE [LARGE SCALE GENOMIC DNA]</scope>
    <source>
        <strain>YPIII</strain>
    </source>
</reference>
<comment type="function">
    <text evidence="1">Mediates the interaction of DNA replication initiator protein DnaA with DNA polymerase subunit beta sliding clamp (dnaN). Stimulates hydrolysis of ATP-DnaA to ADP-DnaA, rendering DnaA inactive for reinitiation, a process called regulatory inhibition of DnaA or RIDA (By similarity).</text>
</comment>
<comment type="subunit">
    <text evidence="2">The active form seems to be an ADP-bound monomer. Forms the RIDA complex (regulatory inactivation of DnaA) of ATP-DnaA, ADP-Hda and the DNA-loaded beta sliding clamp (dnaN).</text>
</comment>
<comment type="similarity">
    <text evidence="2">Belongs to the DnaA family. HdA subfamily.</text>
</comment>
<name>HDA_YERPY</name>
<protein>
    <recommendedName>
        <fullName evidence="2">DnaA regulatory inactivator Hda</fullName>
    </recommendedName>
</protein>
<dbReference type="EMBL" id="CP000950">
    <property type="protein sequence ID" value="ACA67648.1"/>
    <property type="molecule type" value="Genomic_DNA"/>
</dbReference>
<dbReference type="RefSeq" id="WP_002228401.1">
    <property type="nucleotide sequence ID" value="NZ_CP009792.1"/>
</dbReference>
<dbReference type="SMR" id="B1JSF7"/>
<dbReference type="GeneID" id="96666285"/>
<dbReference type="KEGG" id="ypy:YPK_1354"/>
<dbReference type="PATRIC" id="fig|502800.11.peg.1990"/>
<dbReference type="GO" id="GO:0006270">
    <property type="term" value="P:DNA replication initiation"/>
    <property type="evidence" value="ECO:0007669"/>
    <property type="project" value="TreeGrafter"/>
</dbReference>
<dbReference type="GO" id="GO:0032297">
    <property type="term" value="P:negative regulation of DNA-templated DNA replication initiation"/>
    <property type="evidence" value="ECO:0007669"/>
    <property type="project" value="InterPro"/>
</dbReference>
<dbReference type="FunFam" id="1.10.8.60:FF:000024">
    <property type="entry name" value="DnaA regulatory inactivator Hda"/>
    <property type="match status" value="1"/>
</dbReference>
<dbReference type="FunFam" id="3.40.50.300:FF:000452">
    <property type="entry name" value="DnaA regulatory inactivator Hda"/>
    <property type="match status" value="1"/>
</dbReference>
<dbReference type="Gene3D" id="1.10.8.60">
    <property type="match status" value="1"/>
</dbReference>
<dbReference type="Gene3D" id="3.40.50.300">
    <property type="entry name" value="P-loop containing nucleotide triphosphate hydrolases"/>
    <property type="match status" value="1"/>
</dbReference>
<dbReference type="HAMAP" id="MF_01158">
    <property type="entry name" value="Hda"/>
    <property type="match status" value="1"/>
</dbReference>
<dbReference type="InterPro" id="IPR020591">
    <property type="entry name" value="Chromosome_initiator_DnaA-like"/>
</dbReference>
<dbReference type="InterPro" id="IPR013317">
    <property type="entry name" value="DnaA_dom"/>
</dbReference>
<dbReference type="InterPro" id="IPR017788">
    <property type="entry name" value="Hda"/>
</dbReference>
<dbReference type="InterPro" id="IPR022864">
    <property type="entry name" value="Hda_Enterobact"/>
</dbReference>
<dbReference type="InterPro" id="IPR055199">
    <property type="entry name" value="Hda_lid"/>
</dbReference>
<dbReference type="InterPro" id="IPR027417">
    <property type="entry name" value="P-loop_NTPase"/>
</dbReference>
<dbReference type="NCBIfam" id="TIGR03420">
    <property type="entry name" value="DnaA_homol_Hda"/>
    <property type="match status" value="1"/>
</dbReference>
<dbReference type="NCBIfam" id="NF005982">
    <property type="entry name" value="PRK08084.1"/>
    <property type="match status" value="1"/>
</dbReference>
<dbReference type="PANTHER" id="PTHR30050">
    <property type="entry name" value="CHROMOSOMAL REPLICATION INITIATOR PROTEIN DNAA"/>
    <property type="match status" value="1"/>
</dbReference>
<dbReference type="PANTHER" id="PTHR30050:SF5">
    <property type="entry name" value="DNAA REGULATORY INACTIVATOR HDA"/>
    <property type="match status" value="1"/>
</dbReference>
<dbReference type="Pfam" id="PF00308">
    <property type="entry name" value="Bac_DnaA"/>
    <property type="match status" value="1"/>
</dbReference>
<dbReference type="Pfam" id="PF22688">
    <property type="entry name" value="Hda_lid"/>
    <property type="match status" value="1"/>
</dbReference>
<dbReference type="PRINTS" id="PR00051">
    <property type="entry name" value="DNAA"/>
</dbReference>
<dbReference type="SUPFAM" id="SSF52540">
    <property type="entry name" value="P-loop containing nucleoside triphosphate hydrolases"/>
    <property type="match status" value="1"/>
</dbReference>